<sequence length="2353" mass="264612">MNIVRKLNLMIPWSIFLLHVLLFSLQEYICASSILMGTSKNGFNENRQKRALLAAQFEATSPRYFFHDAINWGESKIKGSCPYECLNGAFCSKTGTCDCQIFQALGTRCQIIPNMGNGRDGICKTWGQYHFETFDGIYYYFPGNCSYIFAKDCGDLEPRYTVWVHNSPKCLGSVYSCYRSISLFFSNQEEIRIYGHEIKKNGISLTLPQTIGQIFIEKLADYILVKTTFGFSLAWDGISGIYLKLSEDHKGKSCGLCGNYNDIQSDDFIILQEDYTEDIAMFANSWSVQTPDDTKCVLTPSDFPNPCSSGMPAFEAIFFKCQILLQFPFLSCHEYIDPYLYIASCVNDLCKTDDDETYCRAATEYARACSHAGYPIQDWRDDFPACTDKCDDSFVHRDCISCCPPTCTFEKQCLGSNLHCLDGCYCPDGLVMDNGTCISLENCPCGFHGLAYSVGSKIEQECTECVCVGGVWNCTEQDCPVQCSVVGDSHFTTFDGRHYSFIGMCQYILVKGTGKDKFTITLQKAPCEQNLGLVCLQSITLILEDDFNKQVTLGRGGQILTSPNQGFNLNGIVEIQTLSSLFILLKTTFGLKILFAIDGERIYIQLTSAWKRRTLGLCGTFNGNIRDDFLSPSGMIEGTPQLHANAWRVSSTCFAPVHVPVVDPCNINQQNIGYAAHCDVIHQELFAPCHIYISPGLYYQLCRHDACKCGSSCLCNALAHYAYLCGQHGVPIDFRTQISFCAVVCQKGMLYHHCSSFCLHSCISLSSPEQCSDDCAEGCNCPEGKFYEDTLNFCVPIFHCRCHYRGSVYQPGELIPTPSGLCQCSNGTVKCDELATPSAVHICPEGKEYFDCRFPDPELPAGGVNCETTCANLAMNFTCTPSSPCISGCVCAPGMAEHRGKCYVPESCPCIWKDWEYLSGEVIATPCYTCVCRRGMFNCTYYPCPAVCTIYGDRHYYSFDGLEYDYISDCQVFLIKSADDSDISVIAQNKKCFDNDIVCSKSVLISVGDTEIYLNDTPYKQKQSGFFLENKSTYQLWKAGYYIVVYFPEKDITILWDRKTTIHIKVGPQWKNKLSGLCGNFDKCTSNDMTTSNNLEVRNARVFGDSWALGQCESPDETIKPCEAHQNKFPYAKKECSILYSDIFASCRNVIDVTSFAKNCHEDTCNCNLGGDCECLCTSIAAYAYKCCQEGISIHWRSSTVCSLDCEYYNEGLGEGPYMLASYGQSGLVLGANMTSRSVFCLPRSSVHTSLFFYFMITPGLFKEKVSSLALVSLESAERPNYFLYVHDNDTLSLELWEANSAFHRRATFFHHQGLWIPGYSAFELYSKKGFFIIFTDSSVKASKYDDSEEFKHSSSFSIEEIQAAVPYRKMCEWRYEPCATPCFKTCSDPEALACKFLPPVEGCLPYCPKNMILDEVTLKCVYPRDCIPVIPTEPTLMPPAKPTVPMFTVWEMITPSDITVFDMLTPTTGLECEPQKFDPVYDCSQYICLNMEWQLYNWSLNCPKDVEMPDCGFRGRPVQVNSDICCPEWECPCRCSMLSELSIITFDGNNAALYSMASYILVRIPGEIIVAHIEKCSMNQNGNSLKKLAPSGRISGLCFKKLNVTTPIHKIIVNRLARKVEVDSIVVPLPFSSQELSIEDSGSMYVITTPAGLIIKWSHLTGIIDIHFGFRFNLSSYTEGLCGICNEDPDDDLRMQNGTIITNMEDIGLFIESWEIEKSFEVTMRRPVRNCTEHDCSQCIDLLNRRIFIPCHDKVSPEDFCEKMWINYTYFWNYECDALSAYVALCNKFDICIQWRTPDYCSLSCPEGKEYQPCVRPCEARTCLNQWFYGHTSCLNLREDCVCKVGTILHRPHSAQCIPEKECACTDSEDQPRTAGEIWNGGIDECTLYKCLENGSIIPIEPDCDEEPTPVCEREAEVVMGIIDKWTCCSKEVCGCDTTLCETSIPTCTNSQKLIVGHSPLSCCPQYKCECDPLKCPSISTPECREDQFMIQVRQEEPCCFSPFCVCESCTKPVPLCHDGEFLTVDLNSTHFCCPQYYCVCEPNLCPMPLLNCAEDMNLVKENVSGQCCPTWHCECNCENLIMPTCEVGEFTAIDHNFQSDCGCIQYLCEKDDVCVFQEVSVLNPGQSMIKYLEEDFCYAIECLEEKDNHTGFHTLNFTLVNCSKKCDVHQVYTPSPSDYGCCGTCKNVSCKFHMENGTSVVYAVGSTWHYNCTTYECVKTDEGAIILNYTMVCPPFNETECKMNEGIVKLYNEGCCKICKREERICQKVIIKSVIRKQDCMSQSPINVASCDGKCPSATIYNINIESHLRFCKCCRENGVRNLSVPLYCSGNGTEIMYTLQEPIDCTCQWN</sequence>
<protein>
    <recommendedName>
        <fullName>Otogelin-like protein</fullName>
    </recommendedName>
</protein>
<feature type="signal peptide" evidence="2">
    <location>
        <begin position="1"/>
        <end position="31"/>
    </location>
</feature>
<feature type="chain" id="PRO_0000316765" description="Otogelin-like protein">
    <location>
        <begin position="32"/>
        <end position="2353"/>
    </location>
</feature>
<feature type="domain" description="VWFD 1" evidence="4">
    <location>
        <begin position="121"/>
        <end position="297"/>
    </location>
</feature>
<feature type="domain" description="TIL 1">
    <location>
        <begin position="390"/>
        <end position="443"/>
    </location>
</feature>
<feature type="domain" description="VWFD 2" evidence="4">
    <location>
        <begin position="481"/>
        <end position="654"/>
    </location>
</feature>
<feature type="domain" description="TIL 2">
    <location>
        <begin position="745"/>
        <end position="800"/>
    </location>
</feature>
<feature type="domain" description="VWFD 3" evidence="4">
    <location>
        <begin position="946"/>
        <end position="1115"/>
    </location>
</feature>
<feature type="domain" description="VWFD 4" evidence="4">
    <location>
        <begin position="1534"/>
        <end position="1723"/>
    </location>
</feature>
<feature type="domain" description="CTCK" evidence="3">
    <location>
        <begin position="2261"/>
        <end position="2353"/>
    </location>
</feature>
<feature type="glycosylation site" description="N-linked (GlcNAc...) asparagine" evidence="2">
    <location>
        <position position="144"/>
    </location>
</feature>
<feature type="glycosylation site" description="N-linked (GlcNAc...) asparagine" evidence="2">
    <location>
        <position position="434"/>
    </location>
</feature>
<feature type="glycosylation site" description="N-linked (GlcNAc...) asparagine" evidence="2">
    <location>
        <position position="473"/>
    </location>
</feature>
<feature type="glycosylation site" description="N-linked (GlcNAc...) asparagine" evidence="2">
    <location>
        <position position="826"/>
    </location>
</feature>
<feature type="glycosylation site" description="N-linked (GlcNAc...) asparagine" evidence="2">
    <location>
        <position position="876"/>
    </location>
</feature>
<feature type="glycosylation site" description="N-linked (GlcNAc...) asparagine" evidence="2">
    <location>
        <position position="1289"/>
    </location>
</feature>
<feature type="glycosylation site" description="N-linked (GlcNAc...) asparagine" evidence="2">
    <location>
        <position position="1604"/>
    </location>
</feature>
<feature type="glycosylation site" description="N-linked (GlcNAc...) asparagine" evidence="2">
    <location>
        <position position="2198"/>
    </location>
</feature>
<feature type="disulfide bond" evidence="4">
    <location>
        <begin position="123"/>
        <end position="257"/>
    </location>
</feature>
<feature type="disulfide bond" evidence="4">
    <location>
        <begin position="145"/>
        <end position="296"/>
    </location>
</feature>
<feature type="disulfide bond" evidence="4">
    <location>
        <begin position="483"/>
        <end position="618"/>
    </location>
</feature>
<feature type="disulfide bond" evidence="4">
    <location>
        <begin position="505"/>
        <end position="653"/>
    </location>
</feature>
<feature type="disulfide bond" evidence="4">
    <location>
        <begin position="527"/>
        <end position="535"/>
    </location>
</feature>
<feature type="disulfide bond" evidence="4">
    <location>
        <begin position="948"/>
        <end position="1078"/>
    </location>
</feature>
<feature type="disulfide bond" evidence="4">
    <location>
        <begin position="992"/>
        <end position="999"/>
    </location>
</feature>
<feature type="disulfide bond" evidence="4">
    <location>
        <begin position="1536"/>
        <end position="1683"/>
    </location>
</feature>
<feature type="disulfide bond" evidence="1">
    <location>
        <begin position="2261"/>
        <end position="2317"/>
    </location>
</feature>
<feature type="disulfide bond" evidence="1">
    <location>
        <begin position="2282"/>
        <end position="2331"/>
    </location>
</feature>
<feature type="disulfide bond" evidence="1">
    <location>
        <begin position="2293"/>
        <end position="2348"/>
    </location>
</feature>
<feature type="disulfide bond" evidence="1">
    <location>
        <begin position="2297"/>
        <end position="2350"/>
    </location>
</feature>
<feature type="sequence variant" id="VAR_069040" description="In dbSNP:rs768182016." evidence="6">
    <original>C</original>
    <variation>R</variation>
    <location>
        <position position="1387"/>
    </location>
</feature>
<feature type="sequence variant" id="VAR_038388" description="In a breast cancer sample; somatic mutation." evidence="5">
    <original>C</original>
    <variation>F</variation>
    <location>
        <position position="2297"/>
    </location>
</feature>
<feature type="sequence conflict" description="In Ref. 3; AAI01018/AAI01019 and 2; BAC04877." evidence="7" ref="3 2">
    <original>I</original>
    <variation>V</variation>
    <location>
        <position position="2083"/>
    </location>
</feature>
<feature type="sequence conflict" description="In Ref. 3; AAI01018/AAI01019 and 2; BAC04877." evidence="7" ref="3 2">
    <original>A</original>
    <variation>T</variation>
    <location>
        <position position="2141"/>
    </location>
</feature>
<feature type="sequence conflict" description="In Ref. 3; AAI01018/AAI01019 and 2; BAC11376." evidence="7" ref="3 2">
    <original>N</original>
    <variation>S</variation>
    <location>
        <position position="2246"/>
    </location>
</feature>
<feature type="sequence conflict" description="In Ref. 2; BAC04877." evidence="7" ref="2">
    <original>K</original>
    <variation>E</variation>
    <location>
        <position position="2274"/>
    </location>
</feature>
<name>OTOGL_HUMAN</name>
<dbReference type="EMBL" id="AC078817">
    <property type="status" value="NOT_ANNOTATED_CDS"/>
    <property type="molecule type" value="Genomic_DNA"/>
</dbReference>
<dbReference type="EMBL" id="AC083812">
    <property type="status" value="NOT_ANNOTATED_CDS"/>
    <property type="molecule type" value="Genomic_DNA"/>
</dbReference>
<dbReference type="EMBL" id="AC092945">
    <property type="status" value="NOT_ANNOTATED_CDS"/>
    <property type="molecule type" value="Genomic_DNA"/>
</dbReference>
<dbReference type="EMBL" id="AK075060">
    <property type="protein sequence ID" value="BAC11376.1"/>
    <property type="status" value="ALT_INIT"/>
    <property type="molecule type" value="mRNA"/>
</dbReference>
<dbReference type="EMBL" id="AK096852">
    <property type="protein sequence ID" value="BAC04877.1"/>
    <property type="status" value="ALT_INIT"/>
    <property type="molecule type" value="mRNA"/>
</dbReference>
<dbReference type="EMBL" id="BC101017">
    <property type="protein sequence ID" value="AAI01018.3"/>
    <property type="status" value="ALT_INIT"/>
    <property type="molecule type" value="mRNA"/>
</dbReference>
<dbReference type="EMBL" id="BC101018">
    <property type="protein sequence ID" value="AAI01019.2"/>
    <property type="status" value="ALT_INIT"/>
    <property type="molecule type" value="mRNA"/>
</dbReference>
<dbReference type="CCDS" id="CCDS91730.1"/>
<dbReference type="RefSeq" id="NP_001365538.2">
    <property type="nucleotide sequence ID" value="NM_001378609.3"/>
</dbReference>
<dbReference type="RefSeq" id="NP_001365539.2">
    <property type="nucleotide sequence ID" value="NM_001378610.3"/>
</dbReference>
<dbReference type="RefSeq" id="NP_775862.4">
    <property type="nucleotide sequence ID" value="NM_173591.7"/>
</dbReference>
<dbReference type="SMR" id="Q3ZCN5"/>
<dbReference type="FunCoup" id="Q3ZCN5">
    <property type="interactions" value="32"/>
</dbReference>
<dbReference type="IntAct" id="Q3ZCN5">
    <property type="interactions" value="1"/>
</dbReference>
<dbReference type="STRING" id="9606.ENSP00000447211"/>
<dbReference type="GlyCosmos" id="Q3ZCN5">
    <property type="glycosylation" value="8 sites, No reported glycans"/>
</dbReference>
<dbReference type="GlyGen" id="Q3ZCN5">
    <property type="glycosylation" value="10 sites"/>
</dbReference>
<dbReference type="iPTMnet" id="Q3ZCN5"/>
<dbReference type="PhosphoSitePlus" id="Q3ZCN5"/>
<dbReference type="BioMuta" id="OTOGL"/>
<dbReference type="DMDM" id="449081296"/>
<dbReference type="MassIVE" id="Q3ZCN5"/>
<dbReference type="PaxDb" id="9606-ENSP00000400895"/>
<dbReference type="PeptideAtlas" id="Q3ZCN5"/>
<dbReference type="ProteomicsDB" id="29465"/>
<dbReference type="TopDownProteomics" id="Q3ZCN5"/>
<dbReference type="Antibodypedia" id="51688">
    <property type="antibodies" value="17 antibodies from 9 providers"/>
</dbReference>
<dbReference type="Ensembl" id="ENST00000547103.7">
    <property type="protein sequence ID" value="ENSP00000447211.2"/>
    <property type="gene ID" value="ENSG00000165899.12"/>
</dbReference>
<dbReference type="GeneID" id="283310"/>
<dbReference type="MANE-Select" id="ENST00000547103.7">
    <property type="protein sequence ID" value="ENSP00000447211.2"/>
    <property type="RefSeq nucleotide sequence ID" value="NM_001378609.3"/>
    <property type="RefSeq protein sequence ID" value="NP_001365538.2"/>
</dbReference>
<dbReference type="UCSC" id="uc058rih.1">
    <property type="organism name" value="human"/>
</dbReference>
<dbReference type="AGR" id="HGNC:26901"/>
<dbReference type="GeneCards" id="OTOGL"/>
<dbReference type="HGNC" id="HGNC:26901">
    <property type="gene designation" value="OTOGL"/>
</dbReference>
<dbReference type="HPA" id="ENSG00000165899">
    <property type="expression patterns" value="Group enriched (heart muscle, kidney)"/>
</dbReference>
<dbReference type="MalaCards" id="OTOGL"/>
<dbReference type="MIM" id="614925">
    <property type="type" value="gene"/>
</dbReference>
<dbReference type="MIM" id="614944">
    <property type="type" value="phenotype"/>
</dbReference>
<dbReference type="neXtProt" id="NX_Q3ZCN5"/>
<dbReference type="OpenTargets" id="ENSG00000165899"/>
<dbReference type="Orphanet" id="90636">
    <property type="disease" value="Rare autosomal recessive non-syndromic sensorineural deafness type DFNB"/>
</dbReference>
<dbReference type="VEuPathDB" id="HostDB:ENSG00000165899"/>
<dbReference type="eggNOG" id="KOG1216">
    <property type="taxonomic scope" value="Eukaryota"/>
</dbReference>
<dbReference type="GeneTree" id="ENSGT00940000160698"/>
<dbReference type="HOGENOM" id="CLU_000076_0_0_1"/>
<dbReference type="InParanoid" id="Q3ZCN5"/>
<dbReference type="OrthoDB" id="8921018at2759"/>
<dbReference type="PAN-GO" id="Q3ZCN5">
    <property type="GO annotations" value="2 GO annotations based on evolutionary models"/>
</dbReference>
<dbReference type="TreeFam" id="TF330609"/>
<dbReference type="PathwayCommons" id="Q3ZCN5"/>
<dbReference type="Reactome" id="R-HSA-9662361">
    <property type="pathway name" value="Sensory processing of sound by outer hair cells of the cochlea"/>
</dbReference>
<dbReference type="SignaLink" id="Q3ZCN5"/>
<dbReference type="ChiTaRS" id="OTOGL">
    <property type="organism name" value="human"/>
</dbReference>
<dbReference type="Pharos" id="Q3ZCN5">
    <property type="development level" value="Tbio"/>
</dbReference>
<dbReference type="PRO" id="PR:Q3ZCN5"/>
<dbReference type="Proteomes" id="UP000005640">
    <property type="component" value="Chromosome 12"/>
</dbReference>
<dbReference type="RNAct" id="Q3ZCN5">
    <property type="molecule type" value="protein"/>
</dbReference>
<dbReference type="Bgee" id="ENSG00000165899">
    <property type="expression patterns" value="Expressed in male germ line stem cell (sensu Vertebrata) in testis and 100 other cell types or tissues"/>
</dbReference>
<dbReference type="ExpressionAtlas" id="Q3ZCN5">
    <property type="expression patterns" value="baseline and differential"/>
</dbReference>
<dbReference type="GO" id="GO:0031012">
    <property type="term" value="C:extracellular matrix"/>
    <property type="evidence" value="ECO:0000318"/>
    <property type="project" value="GO_Central"/>
</dbReference>
<dbReference type="GO" id="GO:0005615">
    <property type="term" value="C:extracellular space"/>
    <property type="evidence" value="ECO:0000318"/>
    <property type="project" value="GO_Central"/>
</dbReference>
<dbReference type="GO" id="GO:0046556">
    <property type="term" value="F:alpha-L-arabinofuranosidase activity"/>
    <property type="evidence" value="ECO:0007669"/>
    <property type="project" value="InterPro"/>
</dbReference>
<dbReference type="GO" id="GO:0060122">
    <property type="term" value="P:inner ear receptor cell stereocilium organization"/>
    <property type="evidence" value="ECO:0007669"/>
    <property type="project" value="Ensembl"/>
</dbReference>
<dbReference type="GO" id="GO:0046373">
    <property type="term" value="P:L-arabinose metabolic process"/>
    <property type="evidence" value="ECO:0007669"/>
    <property type="project" value="InterPro"/>
</dbReference>
<dbReference type="GO" id="GO:0008104">
    <property type="term" value="P:protein localization"/>
    <property type="evidence" value="ECO:0007669"/>
    <property type="project" value="Ensembl"/>
</dbReference>
<dbReference type="GO" id="GO:0055127">
    <property type="term" value="P:vibrational conductance of sound to the inner ear"/>
    <property type="evidence" value="ECO:0007669"/>
    <property type="project" value="Ensembl"/>
</dbReference>
<dbReference type="CDD" id="cd23401">
    <property type="entry name" value="beta-trefoil_ABD_OTOGL"/>
    <property type="match status" value="1"/>
</dbReference>
<dbReference type="CDD" id="cd19941">
    <property type="entry name" value="TIL"/>
    <property type="match status" value="4"/>
</dbReference>
<dbReference type="Gene3D" id="2.80.10.50">
    <property type="match status" value="1"/>
</dbReference>
<dbReference type="Gene3D" id="2.10.25.10">
    <property type="entry name" value="Laminin"/>
    <property type="match status" value="4"/>
</dbReference>
<dbReference type="InterPro" id="IPR007934">
    <property type="entry name" value="AbfB_ABD"/>
</dbReference>
<dbReference type="InterPro" id="IPR036195">
    <property type="entry name" value="AbfB_ABD_sf"/>
</dbReference>
<dbReference type="InterPro" id="IPR006207">
    <property type="entry name" value="Cys_knot_C"/>
</dbReference>
<dbReference type="InterPro" id="IPR050780">
    <property type="entry name" value="Mucin_vWF_Thrombospondin_sf"/>
</dbReference>
<dbReference type="InterPro" id="IPR036084">
    <property type="entry name" value="Ser_inhib-like_sf"/>
</dbReference>
<dbReference type="InterPro" id="IPR002919">
    <property type="entry name" value="TIL_dom"/>
</dbReference>
<dbReference type="InterPro" id="IPR014853">
    <property type="entry name" value="VWF/SSPO/ZAN-like_Cys-rich_dom"/>
</dbReference>
<dbReference type="InterPro" id="IPR001007">
    <property type="entry name" value="VWF_dom"/>
</dbReference>
<dbReference type="InterPro" id="IPR001846">
    <property type="entry name" value="VWF_type-D"/>
</dbReference>
<dbReference type="PANTHER" id="PTHR11339">
    <property type="entry name" value="EXTRACELLULAR MATRIX GLYCOPROTEIN RELATED"/>
    <property type="match status" value="1"/>
</dbReference>
<dbReference type="PANTHER" id="PTHR11339:SF225">
    <property type="entry name" value="OTOGELIN-LIKE PROTEIN"/>
    <property type="match status" value="1"/>
</dbReference>
<dbReference type="Pfam" id="PF05270">
    <property type="entry name" value="AbfB"/>
    <property type="match status" value="1"/>
</dbReference>
<dbReference type="Pfam" id="PF08742">
    <property type="entry name" value="C8"/>
    <property type="match status" value="4"/>
</dbReference>
<dbReference type="Pfam" id="PF01826">
    <property type="entry name" value="TIL"/>
    <property type="match status" value="1"/>
</dbReference>
<dbReference type="Pfam" id="PF00094">
    <property type="entry name" value="VWD"/>
    <property type="match status" value="4"/>
</dbReference>
<dbReference type="SMART" id="SM00832">
    <property type="entry name" value="C8"/>
    <property type="match status" value="4"/>
</dbReference>
<dbReference type="SMART" id="SM00041">
    <property type="entry name" value="CT"/>
    <property type="match status" value="1"/>
</dbReference>
<dbReference type="SMART" id="SM00215">
    <property type="entry name" value="VWC_out"/>
    <property type="match status" value="2"/>
</dbReference>
<dbReference type="SMART" id="SM00216">
    <property type="entry name" value="VWD"/>
    <property type="match status" value="4"/>
</dbReference>
<dbReference type="SUPFAM" id="SSF110221">
    <property type="entry name" value="AbfB domain"/>
    <property type="match status" value="1"/>
</dbReference>
<dbReference type="SUPFAM" id="SSF57567">
    <property type="entry name" value="Serine protease inhibitors"/>
    <property type="match status" value="4"/>
</dbReference>
<dbReference type="PROSITE" id="PS01225">
    <property type="entry name" value="CTCK_2"/>
    <property type="match status" value="1"/>
</dbReference>
<dbReference type="PROSITE" id="PS51233">
    <property type="entry name" value="VWFD"/>
    <property type="match status" value="4"/>
</dbReference>
<gene>
    <name type="primary">OTOGL</name>
    <name type="synonym">C12orf64</name>
</gene>
<keyword id="KW-0209">Deafness</keyword>
<keyword id="KW-1015">Disulfide bond</keyword>
<keyword id="KW-0325">Glycoprotein</keyword>
<keyword id="KW-1010">Non-syndromic deafness</keyword>
<keyword id="KW-1267">Proteomics identification</keyword>
<keyword id="KW-1185">Reference proteome</keyword>
<keyword id="KW-0677">Repeat</keyword>
<keyword id="KW-0964">Secreted</keyword>
<keyword id="KW-0732">Signal</keyword>
<accession>Q3ZCN5</accession>
<accession>F8W0C3</accession>
<accession>Q495U8</accession>
<accession>Q8N8G5</accession>
<accession>Q8NC28</accession>
<reference key="1">
    <citation type="journal article" date="2006" name="Nature">
        <title>The finished DNA sequence of human chromosome 12.</title>
        <authorList>
            <person name="Scherer S.E."/>
            <person name="Muzny D.M."/>
            <person name="Buhay C.J."/>
            <person name="Chen R."/>
            <person name="Cree A."/>
            <person name="Ding Y."/>
            <person name="Dugan-Rocha S."/>
            <person name="Gill R."/>
            <person name="Gunaratne P."/>
            <person name="Harris R.A."/>
            <person name="Hawes A.C."/>
            <person name="Hernandez J."/>
            <person name="Hodgson A.V."/>
            <person name="Hume J."/>
            <person name="Jackson A."/>
            <person name="Khan Z.M."/>
            <person name="Kovar-Smith C."/>
            <person name="Lewis L.R."/>
            <person name="Lozado R.J."/>
            <person name="Metzker M.L."/>
            <person name="Milosavljevic A."/>
            <person name="Miner G.R."/>
            <person name="Montgomery K.T."/>
            <person name="Morgan M.B."/>
            <person name="Nazareth L.V."/>
            <person name="Scott G."/>
            <person name="Sodergren E."/>
            <person name="Song X.-Z."/>
            <person name="Steffen D."/>
            <person name="Lovering R.C."/>
            <person name="Wheeler D.A."/>
            <person name="Worley K.C."/>
            <person name="Yuan Y."/>
            <person name="Zhang Z."/>
            <person name="Adams C.Q."/>
            <person name="Ansari-Lari M.A."/>
            <person name="Ayele M."/>
            <person name="Brown M.J."/>
            <person name="Chen G."/>
            <person name="Chen Z."/>
            <person name="Clerc-Blankenburg K.P."/>
            <person name="Davis C."/>
            <person name="Delgado O."/>
            <person name="Dinh H.H."/>
            <person name="Draper H."/>
            <person name="Gonzalez-Garay M.L."/>
            <person name="Havlak P."/>
            <person name="Jackson L.R."/>
            <person name="Jacob L.S."/>
            <person name="Kelly S.H."/>
            <person name="Li L."/>
            <person name="Li Z."/>
            <person name="Liu J."/>
            <person name="Liu W."/>
            <person name="Lu J."/>
            <person name="Maheshwari M."/>
            <person name="Nguyen B.-V."/>
            <person name="Okwuonu G.O."/>
            <person name="Pasternak S."/>
            <person name="Perez L.M."/>
            <person name="Plopper F.J.H."/>
            <person name="Santibanez J."/>
            <person name="Shen H."/>
            <person name="Tabor P.E."/>
            <person name="Verduzco D."/>
            <person name="Waldron L."/>
            <person name="Wang Q."/>
            <person name="Williams G.A."/>
            <person name="Zhang J."/>
            <person name="Zhou J."/>
            <person name="Allen C.C."/>
            <person name="Amin A.G."/>
            <person name="Anyalebechi V."/>
            <person name="Bailey M."/>
            <person name="Barbaria J.A."/>
            <person name="Bimage K.E."/>
            <person name="Bryant N.P."/>
            <person name="Burch P.E."/>
            <person name="Burkett C.E."/>
            <person name="Burrell K.L."/>
            <person name="Calderon E."/>
            <person name="Cardenas V."/>
            <person name="Carter K."/>
            <person name="Casias K."/>
            <person name="Cavazos I."/>
            <person name="Cavazos S.R."/>
            <person name="Ceasar H."/>
            <person name="Chacko J."/>
            <person name="Chan S.N."/>
            <person name="Chavez D."/>
            <person name="Christopoulos C."/>
            <person name="Chu J."/>
            <person name="Cockrell R."/>
            <person name="Cox C.D."/>
            <person name="Dang M."/>
            <person name="Dathorne S.R."/>
            <person name="David R."/>
            <person name="Davis C.M."/>
            <person name="Davy-Carroll L."/>
            <person name="Deshazo D.R."/>
            <person name="Donlin J.E."/>
            <person name="D'Souza L."/>
            <person name="Eaves K.A."/>
            <person name="Egan A."/>
            <person name="Emery-Cohen A.J."/>
            <person name="Escotto M."/>
            <person name="Flagg N."/>
            <person name="Forbes L.D."/>
            <person name="Gabisi A.M."/>
            <person name="Garza M."/>
            <person name="Hamilton C."/>
            <person name="Henderson N."/>
            <person name="Hernandez O."/>
            <person name="Hines S."/>
            <person name="Hogues M.E."/>
            <person name="Huang M."/>
            <person name="Idlebird D.G."/>
            <person name="Johnson R."/>
            <person name="Jolivet A."/>
            <person name="Jones S."/>
            <person name="Kagan R."/>
            <person name="King L.M."/>
            <person name="Leal B."/>
            <person name="Lebow H."/>
            <person name="Lee S."/>
            <person name="LeVan J.M."/>
            <person name="Lewis L.C."/>
            <person name="London P."/>
            <person name="Lorensuhewa L.M."/>
            <person name="Loulseged H."/>
            <person name="Lovett D.A."/>
            <person name="Lucier A."/>
            <person name="Lucier R.L."/>
            <person name="Ma J."/>
            <person name="Madu R.C."/>
            <person name="Mapua P."/>
            <person name="Martindale A.D."/>
            <person name="Martinez E."/>
            <person name="Massey E."/>
            <person name="Mawhiney S."/>
            <person name="Meador M.G."/>
            <person name="Mendez S."/>
            <person name="Mercado C."/>
            <person name="Mercado I.C."/>
            <person name="Merritt C.E."/>
            <person name="Miner Z.L."/>
            <person name="Minja E."/>
            <person name="Mitchell T."/>
            <person name="Mohabbat F."/>
            <person name="Mohabbat K."/>
            <person name="Montgomery B."/>
            <person name="Moore N."/>
            <person name="Morris S."/>
            <person name="Munidasa M."/>
            <person name="Ngo R.N."/>
            <person name="Nguyen N.B."/>
            <person name="Nickerson E."/>
            <person name="Nwaokelemeh O.O."/>
            <person name="Nwokenkwo S."/>
            <person name="Obregon M."/>
            <person name="Oguh M."/>
            <person name="Oragunye N."/>
            <person name="Oviedo R.J."/>
            <person name="Parish B.J."/>
            <person name="Parker D.N."/>
            <person name="Parrish J."/>
            <person name="Parks K.L."/>
            <person name="Paul H.A."/>
            <person name="Payton B.A."/>
            <person name="Perez A."/>
            <person name="Perrin W."/>
            <person name="Pickens A."/>
            <person name="Primus E.L."/>
            <person name="Pu L.-L."/>
            <person name="Puazo M."/>
            <person name="Quiles M.M."/>
            <person name="Quiroz J.B."/>
            <person name="Rabata D."/>
            <person name="Reeves K."/>
            <person name="Ruiz S.J."/>
            <person name="Shao H."/>
            <person name="Sisson I."/>
            <person name="Sonaike T."/>
            <person name="Sorelle R.P."/>
            <person name="Sutton A.E."/>
            <person name="Svatek A.F."/>
            <person name="Svetz L.A."/>
            <person name="Tamerisa K.S."/>
            <person name="Taylor T.R."/>
            <person name="Teague B."/>
            <person name="Thomas N."/>
            <person name="Thorn R.D."/>
            <person name="Trejos Z.Y."/>
            <person name="Trevino B.K."/>
            <person name="Ukegbu O.N."/>
            <person name="Urban J.B."/>
            <person name="Vasquez L.I."/>
            <person name="Vera V.A."/>
            <person name="Villasana D.M."/>
            <person name="Wang L."/>
            <person name="Ward-Moore S."/>
            <person name="Warren J.T."/>
            <person name="Wei X."/>
            <person name="White F."/>
            <person name="Williamson A.L."/>
            <person name="Wleczyk R."/>
            <person name="Wooden H.S."/>
            <person name="Wooden S.H."/>
            <person name="Yen J."/>
            <person name="Yoon L."/>
            <person name="Yoon V."/>
            <person name="Zorrilla S.E."/>
            <person name="Nelson D."/>
            <person name="Kucherlapati R."/>
            <person name="Weinstock G."/>
            <person name="Gibbs R.A."/>
        </authorList>
    </citation>
    <scope>NUCLEOTIDE SEQUENCE [LARGE SCALE GENOMIC DNA]</scope>
</reference>
<reference key="2">
    <citation type="journal article" date="2004" name="Nat. Genet.">
        <title>Complete sequencing and characterization of 21,243 full-length human cDNAs.</title>
        <authorList>
            <person name="Ota T."/>
            <person name="Suzuki Y."/>
            <person name="Nishikawa T."/>
            <person name="Otsuki T."/>
            <person name="Sugiyama T."/>
            <person name="Irie R."/>
            <person name="Wakamatsu A."/>
            <person name="Hayashi K."/>
            <person name="Sato H."/>
            <person name="Nagai K."/>
            <person name="Kimura K."/>
            <person name="Makita H."/>
            <person name="Sekine M."/>
            <person name="Obayashi M."/>
            <person name="Nishi T."/>
            <person name="Shibahara T."/>
            <person name="Tanaka T."/>
            <person name="Ishii S."/>
            <person name="Yamamoto J."/>
            <person name="Saito K."/>
            <person name="Kawai Y."/>
            <person name="Isono Y."/>
            <person name="Nakamura Y."/>
            <person name="Nagahari K."/>
            <person name="Murakami K."/>
            <person name="Yasuda T."/>
            <person name="Iwayanagi T."/>
            <person name="Wagatsuma M."/>
            <person name="Shiratori A."/>
            <person name="Sudo H."/>
            <person name="Hosoiri T."/>
            <person name="Kaku Y."/>
            <person name="Kodaira H."/>
            <person name="Kondo H."/>
            <person name="Sugawara M."/>
            <person name="Takahashi M."/>
            <person name="Kanda K."/>
            <person name="Yokoi T."/>
            <person name="Furuya T."/>
            <person name="Kikkawa E."/>
            <person name="Omura Y."/>
            <person name="Abe K."/>
            <person name="Kamihara K."/>
            <person name="Katsuta N."/>
            <person name="Sato K."/>
            <person name="Tanikawa M."/>
            <person name="Yamazaki M."/>
            <person name="Ninomiya K."/>
            <person name="Ishibashi T."/>
            <person name="Yamashita H."/>
            <person name="Murakawa K."/>
            <person name="Fujimori K."/>
            <person name="Tanai H."/>
            <person name="Kimata M."/>
            <person name="Watanabe M."/>
            <person name="Hiraoka S."/>
            <person name="Chiba Y."/>
            <person name="Ishida S."/>
            <person name="Ono Y."/>
            <person name="Takiguchi S."/>
            <person name="Watanabe S."/>
            <person name="Yosida M."/>
            <person name="Hotuta T."/>
            <person name="Kusano J."/>
            <person name="Kanehori K."/>
            <person name="Takahashi-Fujii A."/>
            <person name="Hara H."/>
            <person name="Tanase T.-O."/>
            <person name="Nomura Y."/>
            <person name="Togiya S."/>
            <person name="Komai F."/>
            <person name="Hara R."/>
            <person name="Takeuchi K."/>
            <person name="Arita M."/>
            <person name="Imose N."/>
            <person name="Musashino K."/>
            <person name="Yuuki H."/>
            <person name="Oshima A."/>
            <person name="Sasaki N."/>
            <person name="Aotsuka S."/>
            <person name="Yoshikawa Y."/>
            <person name="Matsunawa H."/>
            <person name="Ichihara T."/>
            <person name="Shiohata N."/>
            <person name="Sano S."/>
            <person name="Moriya S."/>
            <person name="Momiyama H."/>
            <person name="Satoh N."/>
            <person name="Takami S."/>
            <person name="Terashima Y."/>
            <person name="Suzuki O."/>
            <person name="Nakagawa S."/>
            <person name="Senoh A."/>
            <person name="Mizoguchi H."/>
            <person name="Goto Y."/>
            <person name="Shimizu F."/>
            <person name="Wakebe H."/>
            <person name="Hishigaki H."/>
            <person name="Watanabe T."/>
            <person name="Sugiyama A."/>
            <person name="Takemoto M."/>
            <person name="Kawakami B."/>
            <person name="Yamazaki M."/>
            <person name="Watanabe K."/>
            <person name="Kumagai A."/>
            <person name="Itakura S."/>
            <person name="Fukuzumi Y."/>
            <person name="Fujimori Y."/>
            <person name="Komiyama M."/>
            <person name="Tashiro H."/>
            <person name="Tanigami A."/>
            <person name="Fujiwara T."/>
            <person name="Ono T."/>
            <person name="Yamada K."/>
            <person name="Fujii Y."/>
            <person name="Ozaki K."/>
            <person name="Hirao M."/>
            <person name="Ohmori Y."/>
            <person name="Kawabata A."/>
            <person name="Hikiji T."/>
            <person name="Kobatake N."/>
            <person name="Inagaki H."/>
            <person name="Ikema Y."/>
            <person name="Okamoto S."/>
            <person name="Okitani R."/>
            <person name="Kawakami T."/>
            <person name="Noguchi S."/>
            <person name="Itoh T."/>
            <person name="Shigeta K."/>
            <person name="Senba T."/>
            <person name="Matsumura K."/>
            <person name="Nakajima Y."/>
            <person name="Mizuno T."/>
            <person name="Morinaga M."/>
            <person name="Sasaki M."/>
            <person name="Togashi T."/>
            <person name="Oyama M."/>
            <person name="Hata H."/>
            <person name="Watanabe M."/>
            <person name="Komatsu T."/>
            <person name="Mizushima-Sugano J."/>
            <person name="Satoh T."/>
            <person name="Shirai Y."/>
            <person name="Takahashi Y."/>
            <person name="Nakagawa K."/>
            <person name="Okumura K."/>
            <person name="Nagase T."/>
            <person name="Nomura N."/>
            <person name="Kikuchi H."/>
            <person name="Masuho Y."/>
            <person name="Yamashita R."/>
            <person name="Nakai K."/>
            <person name="Yada T."/>
            <person name="Nakamura Y."/>
            <person name="Ohara O."/>
            <person name="Isogai T."/>
            <person name="Sugano S."/>
        </authorList>
    </citation>
    <scope>NUCLEOTIDE SEQUENCE [LARGE SCALE MRNA] OF 1936-2353</scope>
    <source>
        <tissue>Placenta</tissue>
        <tissue>Vascular endothelial cell</tissue>
    </source>
</reference>
<reference key="3">
    <citation type="journal article" date="2004" name="Genome Res.">
        <title>The status, quality, and expansion of the NIH full-length cDNA project: the Mammalian Gene Collection (MGC).</title>
        <authorList>
            <consortium name="The MGC Project Team"/>
        </authorList>
    </citation>
    <scope>NUCLEOTIDE SEQUENCE [LARGE SCALE MRNA] OF 1959-2353</scope>
</reference>
<reference key="4">
    <citation type="journal article" date="2012" name="Am. J. Hum. Genet.">
        <title>Mutations in OTOGL, encoding the inner ear protein otogelin-like, cause moderate sensorineural hearing loss.</title>
        <authorList>
            <person name="Yariz K.O."/>
            <person name="Duman D."/>
            <person name="Seco C.Z."/>
            <person name="Dallman J."/>
            <person name="Huang M."/>
            <person name="Peters T.A."/>
            <person name="Sirmaci A."/>
            <person name="Lu N."/>
            <person name="Schraders M."/>
            <person name="Skromne I."/>
            <person name="Oostrik J."/>
            <person name="Diaz-Horta O."/>
            <person name="Young J.I."/>
            <person name="Tokgoz-Yilmaz S."/>
            <person name="Konukseven O."/>
            <person name="Shahin H."/>
            <person name="Hetterschijt L."/>
            <person name="Kanaan M."/>
            <person name="Oonk A.M."/>
            <person name="Edwards Y.J."/>
            <person name="Li H."/>
            <person name="Atalay S."/>
            <person name="Blanton S."/>
            <person name="Desmidt A.A."/>
            <person name="Liu X.Z."/>
            <person name="Pennings R.J."/>
            <person name="Lu Z."/>
            <person name="Chen Z.Y."/>
            <person name="Kremer H."/>
            <person name="Tekin M."/>
        </authorList>
    </citation>
    <scope>INVOLVEMENT IN DFNB84B</scope>
    <scope>VARIANT ARG-1387</scope>
    <scope>TISSUE SPECIFICITY</scope>
</reference>
<reference key="5">
    <citation type="journal article" date="2006" name="Science">
        <title>The consensus coding sequences of human breast and colorectal cancers.</title>
        <authorList>
            <person name="Sjoeblom T."/>
            <person name="Jones S."/>
            <person name="Wood L.D."/>
            <person name="Parsons D.W."/>
            <person name="Lin J."/>
            <person name="Barber T.D."/>
            <person name="Mandelker D."/>
            <person name="Leary R.J."/>
            <person name="Ptak J."/>
            <person name="Silliman N."/>
            <person name="Szabo S."/>
            <person name="Buckhaults P."/>
            <person name="Farrell C."/>
            <person name="Meeh P."/>
            <person name="Markowitz S.D."/>
            <person name="Willis J."/>
            <person name="Dawson D."/>
            <person name="Willson J.K.V."/>
            <person name="Gazdar A.F."/>
            <person name="Hartigan J."/>
            <person name="Wu L."/>
            <person name="Liu C."/>
            <person name="Parmigiani G."/>
            <person name="Park B.H."/>
            <person name="Bachman K.E."/>
            <person name="Papadopoulos N."/>
            <person name="Vogelstein B."/>
            <person name="Kinzler K.W."/>
            <person name="Velculescu V.E."/>
        </authorList>
    </citation>
    <scope>VARIANT [LARGE SCALE ANALYSIS] PHE-2297</scope>
</reference>
<organism>
    <name type="scientific">Homo sapiens</name>
    <name type="common">Human</name>
    <dbReference type="NCBI Taxonomy" id="9606"/>
    <lineage>
        <taxon>Eukaryota</taxon>
        <taxon>Metazoa</taxon>
        <taxon>Chordata</taxon>
        <taxon>Craniata</taxon>
        <taxon>Vertebrata</taxon>
        <taxon>Euteleostomi</taxon>
        <taxon>Mammalia</taxon>
        <taxon>Eutheria</taxon>
        <taxon>Euarchontoglires</taxon>
        <taxon>Primates</taxon>
        <taxon>Haplorrhini</taxon>
        <taxon>Catarrhini</taxon>
        <taxon>Hominidae</taxon>
        <taxon>Homo</taxon>
    </lineage>
</organism>
<evidence type="ECO:0000250" key="1"/>
<evidence type="ECO:0000255" key="2"/>
<evidence type="ECO:0000255" key="3">
    <source>
        <dbReference type="PROSITE-ProRule" id="PRU00039"/>
    </source>
</evidence>
<evidence type="ECO:0000255" key="4">
    <source>
        <dbReference type="PROSITE-ProRule" id="PRU00580"/>
    </source>
</evidence>
<evidence type="ECO:0000269" key="5">
    <source>
    </source>
</evidence>
<evidence type="ECO:0000269" key="6">
    <source>
    </source>
</evidence>
<evidence type="ECO:0000305" key="7"/>
<comment type="interaction">
    <interactant intactId="EBI-25954043">
        <id>Q3ZCN5</id>
    </interactant>
    <interactant intactId="EBI-466029">
        <id>P42858</id>
        <label>HTT</label>
    </interactant>
    <organismsDiffer>false</organismsDiffer>
    <experiments>3</experiments>
</comment>
<comment type="subcellular location">
    <subcellularLocation>
        <location evidence="7">Secreted</location>
    </subcellularLocation>
</comment>
<comment type="tissue specificity">
    <text evidence="6">Expressed at high levels in fetal inner ear and heart. Low levels in fetal skeletal muscle, kidney, spleen and colon. Not detected in fetal liver, lung, brain, nor in fetal stomach. In adult tissues, highest levels in brain, kidney, heart and retina. Relatively low levels in lung, spleen and duodenum. Not detected in adult skeletal muscle, liver, nor testis.</text>
</comment>
<comment type="disease" evidence="6">
    <disease id="DI-03565">
        <name>Deafness, autosomal recessive, 84B</name>
        <acronym>DFNB84B</acronym>
        <description>A form of non-syndromic deafness characterized by congenital, non-progressive, sensorineural, symmetric hearing loss. Vestibular hypofunction is rarely observed.</description>
        <dbReference type="MIM" id="614944"/>
    </disease>
    <text>The disease is caused by variants affecting the gene represented in this entry.</text>
</comment>
<comment type="similarity">
    <text evidence="7">Belongs to the otogelin family.</text>
</comment>
<comment type="sequence caution" evidence="7">
    <conflict type="erroneous initiation">
        <sequence resource="EMBL-CDS" id="AAI01018"/>
    </conflict>
    <text>Truncated N-terminus.</text>
</comment>
<comment type="sequence caution" evidence="7">
    <conflict type="erroneous initiation">
        <sequence resource="EMBL-CDS" id="AAI01019"/>
    </conflict>
    <text>Truncated N-terminus.</text>
</comment>
<comment type="sequence caution" evidence="7">
    <conflict type="erroneous initiation">
        <sequence resource="EMBL-CDS" id="BAC04877"/>
    </conflict>
    <text>Truncated N-terminus.</text>
</comment>
<comment type="sequence caution" evidence="7">
    <conflict type="erroneous initiation">
        <sequence resource="EMBL-CDS" id="BAC11376"/>
    </conflict>
    <text>Truncated N-terminus.</text>
</comment>
<proteinExistence type="evidence at protein level"/>